<dbReference type="EMBL" id="BX571871">
    <property type="protein sequence ID" value="CAE15975.1"/>
    <property type="molecule type" value="Genomic_DNA"/>
</dbReference>
<dbReference type="RefSeq" id="WP_011147769.1">
    <property type="nucleotide sequence ID" value="NC_005126.1"/>
</dbReference>
<dbReference type="SMR" id="Q7N193"/>
<dbReference type="STRING" id="243265.plu3602"/>
<dbReference type="GeneID" id="48849848"/>
<dbReference type="KEGG" id="plu:plu3602"/>
<dbReference type="eggNOG" id="COG3079">
    <property type="taxonomic scope" value="Bacteria"/>
</dbReference>
<dbReference type="HOGENOM" id="CLU_085336_1_0_6"/>
<dbReference type="OrthoDB" id="9783391at2"/>
<dbReference type="Proteomes" id="UP000002514">
    <property type="component" value="Chromosome"/>
</dbReference>
<dbReference type="GO" id="GO:0005829">
    <property type="term" value="C:cytosol"/>
    <property type="evidence" value="ECO:0007669"/>
    <property type="project" value="TreeGrafter"/>
</dbReference>
<dbReference type="FunFam" id="1.20.120.740:FF:000001">
    <property type="entry name" value="UPF0149 protein YgfB"/>
    <property type="match status" value="1"/>
</dbReference>
<dbReference type="Gene3D" id="1.20.120.740">
    <property type="entry name" value="YgfB uncharacterised protein family UPF0149, PF03695"/>
    <property type="match status" value="1"/>
</dbReference>
<dbReference type="HAMAP" id="MF_00346">
    <property type="entry name" value="UPF0149"/>
    <property type="match status" value="1"/>
</dbReference>
<dbReference type="InterPro" id="IPR011978">
    <property type="entry name" value="YgfB-like"/>
</dbReference>
<dbReference type="InterPro" id="IPR036255">
    <property type="entry name" value="YgfB-like_sf"/>
</dbReference>
<dbReference type="NCBIfam" id="NF002477">
    <property type="entry name" value="PRK01736.1"/>
    <property type="match status" value="1"/>
</dbReference>
<dbReference type="PANTHER" id="PTHR37528">
    <property type="entry name" value="UPF0149 PROTEIN YGFB"/>
    <property type="match status" value="1"/>
</dbReference>
<dbReference type="PANTHER" id="PTHR37528:SF1">
    <property type="entry name" value="UPF0149 PROTEIN YGFB"/>
    <property type="match status" value="1"/>
</dbReference>
<dbReference type="Pfam" id="PF03695">
    <property type="entry name" value="UPF0149"/>
    <property type="match status" value="1"/>
</dbReference>
<dbReference type="SUPFAM" id="SSF101327">
    <property type="entry name" value="YgfB-like"/>
    <property type="match status" value="1"/>
</dbReference>
<protein>
    <recommendedName>
        <fullName evidence="1">UPF0149 protein plu3602</fullName>
    </recommendedName>
</protein>
<evidence type="ECO:0000255" key="1">
    <source>
        <dbReference type="HAMAP-Rule" id="MF_00346"/>
    </source>
</evidence>
<accession>Q7N193</accession>
<comment type="similarity">
    <text evidence="1">Belongs to the UPF0149 family.</text>
</comment>
<feature type="chain" id="PRO_0000207563" description="UPF0149 protein plu3602">
    <location>
        <begin position="1"/>
        <end position="191"/>
    </location>
</feature>
<sequence length="191" mass="21214">MSIQNSLPDYQSFDETLHQQSVALTAAEMHGLISGLLCGGNRDSSWQVLVHDLANDGLAFSHPLAQKLRELREITFESLDDSNFAFGLLLPDEEDNVFERADALAGWVNHFLLGLGVAQPKFADRKEISEIIGDLRNIGLLGYEEGDDQEELSQALEEVLEYVQVAAQLCYIAFTEPKTVLIAKNDKPTLH</sequence>
<organism>
    <name type="scientific">Photorhabdus laumondii subsp. laumondii (strain DSM 15139 / CIP 105565 / TT01)</name>
    <name type="common">Photorhabdus luminescens subsp. laumondii</name>
    <dbReference type="NCBI Taxonomy" id="243265"/>
    <lineage>
        <taxon>Bacteria</taxon>
        <taxon>Pseudomonadati</taxon>
        <taxon>Pseudomonadota</taxon>
        <taxon>Gammaproteobacteria</taxon>
        <taxon>Enterobacterales</taxon>
        <taxon>Morganellaceae</taxon>
        <taxon>Photorhabdus</taxon>
    </lineage>
</organism>
<gene>
    <name type="ordered locus">plu3602</name>
</gene>
<reference key="1">
    <citation type="journal article" date="2003" name="Nat. Biotechnol.">
        <title>The genome sequence of the entomopathogenic bacterium Photorhabdus luminescens.</title>
        <authorList>
            <person name="Duchaud E."/>
            <person name="Rusniok C."/>
            <person name="Frangeul L."/>
            <person name="Buchrieser C."/>
            <person name="Givaudan A."/>
            <person name="Taourit S."/>
            <person name="Bocs S."/>
            <person name="Boursaux-Eude C."/>
            <person name="Chandler M."/>
            <person name="Charles J.-F."/>
            <person name="Dassa E."/>
            <person name="Derose R."/>
            <person name="Derzelle S."/>
            <person name="Freyssinet G."/>
            <person name="Gaudriault S."/>
            <person name="Medigue C."/>
            <person name="Lanois A."/>
            <person name="Powell K."/>
            <person name="Siguier P."/>
            <person name="Vincent R."/>
            <person name="Wingate V."/>
            <person name="Zouine M."/>
            <person name="Glaser P."/>
            <person name="Boemare N."/>
            <person name="Danchin A."/>
            <person name="Kunst F."/>
        </authorList>
    </citation>
    <scope>NUCLEOTIDE SEQUENCE [LARGE SCALE GENOMIC DNA]</scope>
    <source>
        <strain>DSM 15139 / CIP 105565 / TT01</strain>
    </source>
</reference>
<proteinExistence type="inferred from homology"/>
<keyword id="KW-1185">Reference proteome</keyword>
<name>Y3602_PHOLL</name>